<reference key="1">
    <citation type="journal article" date="2009" name="Genome Res.">
        <title>Newly introduced genomic prophage islands are critical determinants of in vivo competitiveness in the Liverpool epidemic strain of Pseudomonas aeruginosa.</title>
        <authorList>
            <person name="Winstanley C."/>
            <person name="Langille M.G.I."/>
            <person name="Fothergill J.L."/>
            <person name="Kukavica-Ibrulj I."/>
            <person name="Paradis-Bleau C."/>
            <person name="Sanschagrin F."/>
            <person name="Thomson N.R."/>
            <person name="Winsor G.L."/>
            <person name="Quail M.A."/>
            <person name="Lennard N."/>
            <person name="Bignell A."/>
            <person name="Clarke L."/>
            <person name="Seeger K."/>
            <person name="Saunders D."/>
            <person name="Harris D."/>
            <person name="Parkhill J."/>
            <person name="Hancock R.E.W."/>
            <person name="Brinkman F.S.L."/>
            <person name="Levesque R.C."/>
        </authorList>
    </citation>
    <scope>NUCLEOTIDE SEQUENCE [LARGE SCALE GENOMIC DNA]</scope>
    <source>
        <strain>LESB58</strain>
    </source>
</reference>
<name>RL30_PSEA8</name>
<sequence length="58" mass="6478">MATVKVTLVKSLNGRLANHKACVKGLGLRRINHTVEVQDTPENRGMINKAYYLLRVEG</sequence>
<proteinExistence type="inferred from homology"/>
<dbReference type="EMBL" id="FM209186">
    <property type="protein sequence ID" value="CAW25410.1"/>
    <property type="molecule type" value="Genomic_DNA"/>
</dbReference>
<dbReference type="RefSeq" id="WP_003093696.1">
    <property type="nucleotide sequence ID" value="NC_011770.1"/>
</dbReference>
<dbReference type="SMR" id="B7V662"/>
<dbReference type="GeneID" id="77219216"/>
<dbReference type="KEGG" id="pag:PLES_06831"/>
<dbReference type="HOGENOM" id="CLU_131047_1_4_6"/>
<dbReference type="GO" id="GO:0022625">
    <property type="term" value="C:cytosolic large ribosomal subunit"/>
    <property type="evidence" value="ECO:0007669"/>
    <property type="project" value="TreeGrafter"/>
</dbReference>
<dbReference type="GO" id="GO:0003735">
    <property type="term" value="F:structural constituent of ribosome"/>
    <property type="evidence" value="ECO:0007669"/>
    <property type="project" value="InterPro"/>
</dbReference>
<dbReference type="GO" id="GO:0006412">
    <property type="term" value="P:translation"/>
    <property type="evidence" value="ECO:0007669"/>
    <property type="project" value="UniProtKB-UniRule"/>
</dbReference>
<dbReference type="CDD" id="cd01658">
    <property type="entry name" value="Ribosomal_L30"/>
    <property type="match status" value="1"/>
</dbReference>
<dbReference type="FunFam" id="3.30.1390.20:FF:000001">
    <property type="entry name" value="50S ribosomal protein L30"/>
    <property type="match status" value="1"/>
</dbReference>
<dbReference type="Gene3D" id="3.30.1390.20">
    <property type="entry name" value="Ribosomal protein L30, ferredoxin-like fold domain"/>
    <property type="match status" value="1"/>
</dbReference>
<dbReference type="HAMAP" id="MF_01371_B">
    <property type="entry name" value="Ribosomal_uL30_B"/>
    <property type="match status" value="1"/>
</dbReference>
<dbReference type="InterPro" id="IPR036919">
    <property type="entry name" value="Ribo_uL30_ferredoxin-like_sf"/>
</dbReference>
<dbReference type="InterPro" id="IPR005996">
    <property type="entry name" value="Ribosomal_uL30_bac-type"/>
</dbReference>
<dbReference type="InterPro" id="IPR016082">
    <property type="entry name" value="Ribosomal_uL30_ferredoxin-like"/>
</dbReference>
<dbReference type="NCBIfam" id="TIGR01308">
    <property type="entry name" value="rpmD_bact"/>
    <property type="match status" value="1"/>
</dbReference>
<dbReference type="PANTHER" id="PTHR15892:SF2">
    <property type="entry name" value="LARGE RIBOSOMAL SUBUNIT PROTEIN UL30M"/>
    <property type="match status" value="1"/>
</dbReference>
<dbReference type="PANTHER" id="PTHR15892">
    <property type="entry name" value="MITOCHONDRIAL RIBOSOMAL PROTEIN L30"/>
    <property type="match status" value="1"/>
</dbReference>
<dbReference type="Pfam" id="PF00327">
    <property type="entry name" value="Ribosomal_L30"/>
    <property type="match status" value="1"/>
</dbReference>
<dbReference type="PIRSF" id="PIRSF002211">
    <property type="entry name" value="Ribosomal_L30_bac-type"/>
    <property type="match status" value="1"/>
</dbReference>
<dbReference type="SUPFAM" id="SSF55129">
    <property type="entry name" value="Ribosomal protein L30p/L7e"/>
    <property type="match status" value="1"/>
</dbReference>
<organism>
    <name type="scientific">Pseudomonas aeruginosa (strain LESB58)</name>
    <dbReference type="NCBI Taxonomy" id="557722"/>
    <lineage>
        <taxon>Bacteria</taxon>
        <taxon>Pseudomonadati</taxon>
        <taxon>Pseudomonadota</taxon>
        <taxon>Gammaproteobacteria</taxon>
        <taxon>Pseudomonadales</taxon>
        <taxon>Pseudomonadaceae</taxon>
        <taxon>Pseudomonas</taxon>
    </lineage>
</organism>
<accession>B7V662</accession>
<evidence type="ECO:0000255" key="1">
    <source>
        <dbReference type="HAMAP-Rule" id="MF_01371"/>
    </source>
</evidence>
<evidence type="ECO:0000305" key="2"/>
<keyword id="KW-0687">Ribonucleoprotein</keyword>
<keyword id="KW-0689">Ribosomal protein</keyword>
<gene>
    <name evidence="1" type="primary">rpmD</name>
    <name type="ordered locus">PLES_06831</name>
</gene>
<protein>
    <recommendedName>
        <fullName evidence="1">Large ribosomal subunit protein uL30</fullName>
    </recommendedName>
    <alternativeName>
        <fullName evidence="2">50S ribosomal protein L30</fullName>
    </alternativeName>
</protein>
<feature type="chain" id="PRO_1000144704" description="Large ribosomal subunit protein uL30">
    <location>
        <begin position="1"/>
        <end position="58"/>
    </location>
</feature>
<comment type="subunit">
    <text evidence="1">Part of the 50S ribosomal subunit.</text>
</comment>
<comment type="similarity">
    <text evidence="1">Belongs to the universal ribosomal protein uL30 family.</text>
</comment>